<accession>H2KYU6</accession>
<accession>Q95QZ7</accession>
<comment type="function">
    <text evidence="3 4 7 8 9 10">In association with ufd-1 and ATPase cdc-48.1 and/or cdc-48.2, involved in the cytoplasmic elimination of misfolded proteins exported from the ER (PubMed:16647269, PubMed:22768338). This pathway, known as ERAD, prevents the activation of the unfolded protein response (UPR) caused by the accumulation of misfolded proteins in the ER (PubMed:16647269, PubMed:22768338). During S phase and in association with ufd-1, cdc-48.1 and/or cdc-48.2 and ubxn-3, ensures the degradation of DNA licensing factor cdt-1 after the initiation of DNA replication and thus the disassembly of the DNA replication CGM helicase complex by promoting the dissociation from chromatin of several of its components including cdc-45 and sld-5 (PubMed:18728180, PubMed:21981920, PubMed:26842564, PubMed:28368371). Regulates ubxn-3 nuclear localization during S phase (PubMed:26842564).</text>
</comment>
<comment type="subunit">
    <text evidence="3 5 6">Forms a complex composed of ubxn-3, ufd-1, npl-4.1 and cdc-48.1; within the complex, interacts with ufd-1 and ubxn-3 (PubMed:20977550). Interacts with ufd-1 (PubMed:16647269). Interacts with elc-1/elongin C; the interaction may mediate the interaction between the npl-4-ufd-1-cdc-48 complex and the E3 ubiquitin ligase cul-2 complex (PubMed:19773360).</text>
</comment>
<comment type="subcellular location">
    <subcellularLocation>
        <location evidence="4">Cytoplasm</location>
    </subcellularLocation>
    <subcellularLocation>
        <location evidence="4">Nucleus</location>
    </subcellularLocation>
    <text evidence="4">Localizes to the cytoplasm during mitosis. Nuclear localization upon nuclear membrane re-assembly is cdc-48-dependent.</text>
</comment>
<comment type="alternative products">
    <event type="alternative splicing"/>
    <isoform>
        <id>H2KYU6-1</id>
        <name evidence="14">b</name>
        <sequence type="displayed"/>
    </isoform>
    <isoform>
        <id>H2KYU6-2</id>
        <name evidence="14">a</name>
        <sequence type="described" ref="VSP_059819"/>
    </isoform>
</comment>
<comment type="disruption phenotype">
    <text evidence="3 4 7 8 9">Simultaneous RNAi-mediated knockdown of npl-4.1 and npl-4.2 causes embryonic lethality (PubMed:16647269, PubMed:26842564). In embryos, DNA replication is partially impaired causing a delay in S phase progression in P0, AB and P1 cells; simultaneous RNAi-mediated knockdown of DNA replication checkpoint kinases chk-1 or atl-1 suppresses the delay in S phase (PubMed:18728180, PubMed:26842564). During S phase, prevents DNA replication licensing factor cdt-1 down-regulation and causes cdt-1 accumulation on mitotic chromosomes (PubMed:21981920). Impairs dissociation from the chromatin of components of the DNA replication machinery, including cdc-45, GINS complex component sld-5 and CMG helicase component mcm-3, resulting in their persistent association with chromatin throughout embryonic mitosis (PubMed:21981920, PubMed:26842564, PubMed:28368371). Abnormal ubxn-3 localization into punctate structures in the nucleus (PubMed:26842564). Reduces ufd-1 expression in embryos (PubMed:21981920, PubMed:26842564). Simultaneous RNAi-mediated knockdown of npl-4.1 and npl-4.2 in adults causes a proliferation arrest of mitotic germline cells in the gonad with formation of rad-51 foci on chromatin (PubMed:18728180). Induces the unfolded protein response and increases sensitivity to tunicamycin-induced ER stress (PubMed:16647269). Causes accumulation of misfolded protein cpl-1 in the ER (PubMed:22768338).</text>
</comment>
<comment type="similarity">
    <text evidence="11">Belongs to the NPL4 family.</text>
</comment>
<comment type="caution">
    <text evidence="11">There is another gene, npl-4.2, which has a 99% identical sequence making it difficult to identify the specific function for each protein.</text>
</comment>
<keyword id="KW-0025">Alternative splicing</keyword>
<keyword id="KW-0143">Chaperone</keyword>
<keyword id="KW-0963">Cytoplasm</keyword>
<keyword id="KW-0479">Metal-binding</keyword>
<keyword id="KW-0539">Nucleus</keyword>
<keyword id="KW-1185">Reference proteome</keyword>
<keyword id="KW-0862">Zinc</keyword>
<keyword id="KW-0863">Zinc-finger</keyword>
<protein>
    <recommendedName>
        <fullName evidence="14">Nuclear protein localization protein 4 homolog 1</fullName>
    </recommendedName>
</protein>
<name>NPL41_CAEEL</name>
<organism evidence="12">
    <name type="scientific">Caenorhabditis elegans</name>
    <dbReference type="NCBI Taxonomy" id="6239"/>
    <lineage>
        <taxon>Eukaryota</taxon>
        <taxon>Metazoa</taxon>
        <taxon>Ecdysozoa</taxon>
        <taxon>Nematoda</taxon>
        <taxon>Chromadorea</taxon>
        <taxon>Rhabditida</taxon>
        <taxon>Rhabditina</taxon>
        <taxon>Rhabditomorpha</taxon>
        <taxon>Rhabditoidea</taxon>
        <taxon>Rhabditidae</taxon>
        <taxon>Peloderinae</taxon>
        <taxon>Caenorhabditis</taxon>
    </lineage>
</organism>
<feature type="chain" id="PRO_0000445084" description="Nuclear protein localization protein 4 homolog 1">
    <location>
        <begin position="1"/>
        <end position="529"/>
    </location>
</feature>
<feature type="domain" description="MPN" evidence="2">
    <location>
        <begin position="129"/>
        <end position="266"/>
    </location>
</feature>
<feature type="zinc finger region" description="RanBP2-type" evidence="1">
    <location>
        <begin position="499"/>
        <end position="529"/>
    </location>
</feature>
<feature type="splice variant" id="VSP_059819" description="In isoform a." evidence="11">
    <location>
        <begin position="479"/>
        <end position="480"/>
    </location>
</feature>
<evidence type="ECO:0000255" key="1">
    <source>
        <dbReference type="PROSITE-ProRule" id="PRU00322"/>
    </source>
</evidence>
<evidence type="ECO:0000255" key="2">
    <source>
        <dbReference type="PROSITE-ProRule" id="PRU01182"/>
    </source>
</evidence>
<evidence type="ECO:0000269" key="3">
    <source>
    </source>
</evidence>
<evidence type="ECO:0000269" key="4">
    <source>
    </source>
</evidence>
<evidence type="ECO:0000269" key="5">
    <source>
    </source>
</evidence>
<evidence type="ECO:0000269" key="6">
    <source>
    </source>
</evidence>
<evidence type="ECO:0000269" key="7">
    <source>
    </source>
</evidence>
<evidence type="ECO:0000269" key="8">
    <source>
    </source>
</evidence>
<evidence type="ECO:0000269" key="9">
    <source>
    </source>
</evidence>
<evidence type="ECO:0000269" key="10">
    <source>
    </source>
</evidence>
<evidence type="ECO:0000305" key="11"/>
<evidence type="ECO:0000312" key="12">
    <source>
        <dbReference type="Proteomes" id="UP000001940"/>
    </source>
</evidence>
<evidence type="ECO:0000312" key="13">
    <source>
        <dbReference type="WormBase" id="F59E12.4a"/>
    </source>
</evidence>
<evidence type="ECO:0000312" key="14">
    <source>
        <dbReference type="WormBase" id="F59E12.4b"/>
    </source>
</evidence>
<gene>
    <name evidence="14" type="primary">npl-4.1</name>
    <name evidence="13" type="ORF">F59E12.4</name>
</gene>
<proteinExistence type="evidence at protein level"/>
<dbReference type="EMBL" id="BX284602">
    <property type="protein sequence ID" value="CCD64968.1"/>
    <property type="molecule type" value="Genomic_DNA"/>
</dbReference>
<dbReference type="EMBL" id="BX284602">
    <property type="protein sequence ID" value="CCD64969.1"/>
    <property type="molecule type" value="Genomic_DNA"/>
</dbReference>
<dbReference type="RefSeq" id="NP_001370453.1">
    <molecule id="H2KYU6-2"/>
    <property type="nucleotide sequence ID" value="NM_001383846.2"/>
</dbReference>
<dbReference type="RefSeq" id="NP_495096.1">
    <molecule id="H2KYU6-1"/>
    <property type="nucleotide sequence ID" value="NM_062695.6"/>
</dbReference>
<dbReference type="RefSeq" id="NP_495097.1">
    <property type="nucleotide sequence ID" value="NM_062696.4"/>
</dbReference>
<dbReference type="SMR" id="H2KYU6"/>
<dbReference type="DIP" id="DIP-25816N"/>
<dbReference type="FunCoup" id="H2KYU6">
    <property type="interactions" value="3209"/>
</dbReference>
<dbReference type="IntAct" id="H2KYU6">
    <property type="interactions" value="2"/>
</dbReference>
<dbReference type="STRING" id="6239.F59E12.4b.1"/>
<dbReference type="PaxDb" id="6239-F59E12.4b"/>
<dbReference type="PeptideAtlas" id="H2KYU6"/>
<dbReference type="EnsemblMetazoa" id="F59E12.4a.1">
    <molecule id="H2KYU6-2"/>
    <property type="protein sequence ID" value="F59E12.4a.1"/>
    <property type="gene ID" value="WBGene00019120"/>
</dbReference>
<dbReference type="EnsemblMetazoa" id="F59E12.4b.1">
    <molecule id="H2KYU6-1"/>
    <property type="protein sequence ID" value="F59E12.4b.1"/>
    <property type="gene ID" value="WBGene00019120"/>
</dbReference>
<dbReference type="GeneID" id="173952"/>
<dbReference type="KEGG" id="cel:CELE_F59E12.4"/>
<dbReference type="UCSC" id="F59E12.4a">
    <property type="organism name" value="c. elegans"/>
</dbReference>
<dbReference type="AGR" id="WB:WBGene00019120"/>
<dbReference type="CTD" id="173952"/>
<dbReference type="WormBase" id="F59E12.4a">
    <molecule id="H2KYU6-2"/>
    <property type="protein sequence ID" value="CE28572"/>
    <property type="gene ID" value="WBGene00019120"/>
    <property type="gene designation" value="npl-4.1"/>
</dbReference>
<dbReference type="WormBase" id="F59E12.4b">
    <molecule id="H2KYU6-1"/>
    <property type="protein sequence ID" value="CE28573"/>
    <property type="gene ID" value="WBGene00019120"/>
    <property type="gene designation" value="npl-4.1"/>
</dbReference>
<dbReference type="eggNOG" id="KOG2834">
    <property type="taxonomic scope" value="Eukaryota"/>
</dbReference>
<dbReference type="GeneTree" id="ENSGT00390000018731"/>
<dbReference type="HOGENOM" id="CLU_017172_2_0_1"/>
<dbReference type="InParanoid" id="H2KYU6"/>
<dbReference type="OMA" id="TKDRYVP"/>
<dbReference type="OrthoDB" id="10251089at2759"/>
<dbReference type="PhylomeDB" id="H2KYU6"/>
<dbReference type="PRO" id="PR:H2KYU6"/>
<dbReference type="Proteomes" id="UP000001940">
    <property type="component" value="Chromosome II"/>
</dbReference>
<dbReference type="Bgee" id="WBGene00019120">
    <property type="expression patterns" value="Expressed in adult organism and 3 other cell types or tissues"/>
</dbReference>
<dbReference type="GO" id="GO:0005634">
    <property type="term" value="C:nucleus"/>
    <property type="evidence" value="ECO:0000314"/>
    <property type="project" value="WormBase"/>
</dbReference>
<dbReference type="GO" id="GO:0034098">
    <property type="term" value="C:VCP-NPL4-UFD1 AAA ATPase complex"/>
    <property type="evidence" value="ECO:0000314"/>
    <property type="project" value="UniProtKB"/>
</dbReference>
<dbReference type="GO" id="GO:0044877">
    <property type="term" value="F:protein-containing complex binding"/>
    <property type="evidence" value="ECO:0000314"/>
    <property type="project" value="UniProtKB"/>
</dbReference>
<dbReference type="GO" id="GO:0043130">
    <property type="term" value="F:ubiquitin binding"/>
    <property type="evidence" value="ECO:0000318"/>
    <property type="project" value="GO_Central"/>
</dbReference>
<dbReference type="GO" id="GO:0031625">
    <property type="term" value="F:ubiquitin protein ligase binding"/>
    <property type="evidence" value="ECO:0000318"/>
    <property type="project" value="GO_Central"/>
</dbReference>
<dbReference type="GO" id="GO:0008270">
    <property type="term" value="F:zinc ion binding"/>
    <property type="evidence" value="ECO:0007669"/>
    <property type="project" value="UniProtKB-KW"/>
</dbReference>
<dbReference type="GO" id="GO:1900182">
    <property type="term" value="P:positive regulation of protein localization to nucleus"/>
    <property type="evidence" value="ECO:0000315"/>
    <property type="project" value="UniProtKB"/>
</dbReference>
<dbReference type="GO" id="GO:0006511">
    <property type="term" value="P:ubiquitin-dependent protein catabolic process"/>
    <property type="evidence" value="ECO:0000318"/>
    <property type="project" value="GO_Central"/>
</dbReference>
<dbReference type="CDD" id="cd08061">
    <property type="entry name" value="MPN_NPL4"/>
    <property type="match status" value="1"/>
</dbReference>
<dbReference type="Gene3D" id="3.40.140.10">
    <property type="entry name" value="Cytidine Deaminase, domain 2"/>
    <property type="match status" value="1"/>
</dbReference>
<dbReference type="InterPro" id="IPR037518">
    <property type="entry name" value="MPN"/>
</dbReference>
<dbReference type="InterPro" id="IPR016563">
    <property type="entry name" value="Npl4"/>
</dbReference>
<dbReference type="InterPro" id="IPR007717">
    <property type="entry name" value="NPL4_C"/>
</dbReference>
<dbReference type="InterPro" id="IPR007716">
    <property type="entry name" value="NPL4_Zn-bd_put"/>
</dbReference>
<dbReference type="InterPro" id="IPR001876">
    <property type="entry name" value="Znf_RanBP2"/>
</dbReference>
<dbReference type="InterPro" id="IPR036443">
    <property type="entry name" value="Znf_RanBP2_sf"/>
</dbReference>
<dbReference type="PANTHER" id="PTHR12710">
    <property type="entry name" value="NUCLEAR PROTEIN LOCALIZATION 4"/>
    <property type="match status" value="1"/>
</dbReference>
<dbReference type="PANTHER" id="PTHR12710:SF0">
    <property type="entry name" value="NUCLEAR PROTEIN LOCALIZATION PROTEIN 4 HOMOLOG"/>
    <property type="match status" value="1"/>
</dbReference>
<dbReference type="Pfam" id="PF05021">
    <property type="entry name" value="NPL4"/>
    <property type="match status" value="1"/>
</dbReference>
<dbReference type="Pfam" id="PF05020">
    <property type="entry name" value="zf-NPL4"/>
    <property type="match status" value="1"/>
</dbReference>
<dbReference type="PIRSF" id="PIRSF010052">
    <property type="entry name" value="Polyub_prc_Npl4"/>
    <property type="match status" value="1"/>
</dbReference>
<dbReference type="SMART" id="SM00547">
    <property type="entry name" value="ZnF_RBZ"/>
    <property type="match status" value="1"/>
</dbReference>
<dbReference type="SUPFAM" id="SSF90209">
    <property type="entry name" value="Ran binding protein zinc finger-like"/>
    <property type="match status" value="1"/>
</dbReference>
<dbReference type="PROSITE" id="PS50249">
    <property type="entry name" value="MPN"/>
    <property type="match status" value="1"/>
</dbReference>
<dbReference type="PROSITE" id="PS01358">
    <property type="entry name" value="ZF_RANBP2_1"/>
    <property type="match status" value="1"/>
</dbReference>
<dbReference type="PROSITE" id="PS50199">
    <property type="entry name" value="ZF_RANBP2_2"/>
    <property type="match status" value="1"/>
</dbReference>
<sequence>MVLEVPQTERVNDVDVFLSTQDGQIQRPKGPNCRHPVRQKCTNCLPVDPFDEEYLKEKDIKHMSFHAHVRKLLGSQGKGTTLKKPLENFRCSLKPNCDAHKPFPKGICTKCKPQVVTLNRQKFRHVDNIQIENQELVNQFLDYWRLSGHQRVGFLIGQYQPHLEVPLGIKATVAAIYEPPQHCREDGIEFLEDKNQKTIDNLLEMLGLQRVGWIFTDCWTANSAEGTVHYTRHKDSFFLSAEECITAAMLQNQHPNITEYSMDRHYGSKFVTVVASGDESMHVNFHGYQVSNQCAAMVEADILCPTLYTPELAYVRETPLSEEHYITDVQFSMKNEYGAEVMKNGRPLPVEYLLVDVPAGMPKEPHYTFHVGTSNKSKSAKFNVENRQAIGQLQGGANLIQYSSEFSKNQFLEQATNFHFLLYLVTNDQVQISDEWMKRLCDAVKAQDRGTAMEWAQECEDWHQLMALAHANGGSGNDVSDIPVIPNGDPFSGSSSGGSGGAVWNCGHCTFQNEAARQDCSMCGLPAAD</sequence>
<reference evidence="12" key="1">
    <citation type="journal article" date="1998" name="Science">
        <title>Genome sequence of the nematode C. elegans: a platform for investigating biology.</title>
        <authorList>
            <consortium name="The C. elegans sequencing consortium"/>
        </authorList>
    </citation>
    <scope>NUCLEOTIDE SEQUENCE [LARGE SCALE GENOMIC DNA]</scope>
    <source>
        <strain evidence="12">Bristol N2</strain>
    </source>
</reference>
<reference evidence="11" key="2">
    <citation type="journal article" date="2006" name="J. Struct. Biol.">
        <title>A conserved role of Caenorhabditis elegans CDC-48 in ER-associated protein degradation.</title>
        <authorList>
            <person name="Mouysset J."/>
            <person name="Kaehler C."/>
            <person name="Hoppe T."/>
        </authorList>
    </citation>
    <scope>FUNCTION</scope>
    <scope>INTERACTION WITH UFD-1</scope>
    <scope>DISRUPTION PHENOTYPE</scope>
</reference>
<reference evidence="11" key="3">
    <citation type="journal article" date="2008" name="Proc. Natl. Acad. Sci. U.S.A.">
        <title>Cell cycle progression requires the CDC-48UFD-1/NPL-4 complex for efficient DNA replication.</title>
        <authorList>
            <person name="Mouysset J."/>
            <person name="Deichsel A."/>
            <person name="Moser S."/>
            <person name="Hoege C."/>
            <person name="Hyman A.A."/>
            <person name="Gartner A."/>
            <person name="Hoppe T."/>
        </authorList>
    </citation>
    <scope>FUNCTION</scope>
    <scope>SUBCELLULAR LOCATION</scope>
    <scope>DISRUPTION PHENOTYPE</scope>
</reference>
<reference evidence="11" key="4">
    <citation type="journal article" date="2009" name="J. Cell Sci.">
        <title>Caenorhabditis elegans p97 controls germline-specific sex determination by controlling the TRA-1 level in a CUL-2-dependent manner.</title>
        <authorList>
            <person name="Sasagawa Y."/>
            <person name="Otani M."/>
            <person name="Higashitani N."/>
            <person name="Higashitani A."/>
            <person name="Sato K."/>
            <person name="Ogura T."/>
            <person name="Yamanaka K."/>
        </authorList>
    </citation>
    <scope>INTERACTION WITH ELC-1</scope>
</reference>
<reference evidence="11" key="5">
    <citation type="journal article" date="2010" name="Genes Cells">
        <title>Caenorhabditis elegans UBX cofactors for CDC-48/p97 control spermatogenesis.</title>
        <authorList>
            <person name="Sasagawa Y."/>
            <person name="Yamanaka K."/>
            <person name="Saito-Sasagawa Y."/>
            <person name="Ogura T."/>
        </authorList>
    </citation>
    <scope>IDENTIFICATION IN A COMPLEX WITH UBXN-3; UFD-1 AND CDC-48.1</scope>
    <scope>INTERACTION WITH UBXN-3 AND UFD-1</scope>
</reference>
<reference evidence="11" key="6">
    <citation type="journal article" date="2011" name="Mol. Cell">
        <title>CDC-48/p97 coordinates CDT-1 degradation with GINS chromatin dissociation to ensure faithful DNA replication.</title>
        <authorList>
            <person name="Franz A."/>
            <person name="Orth M."/>
            <person name="Pirson P.A."/>
            <person name="Sonneville R."/>
            <person name="Blow J.J."/>
            <person name="Gartner A."/>
            <person name="Stemmann O."/>
            <person name="Hoppe T."/>
        </authorList>
    </citation>
    <scope>FUNCTION</scope>
    <scope>DISRUPTION PHENOTYPE</scope>
</reference>
<reference evidence="11" key="7">
    <citation type="journal article" date="2012" name="PLoS ONE">
        <title>A pro-cathepsin L mutant is a luminal substrate for endoplasmic-reticulum-associated degradation in C. elegans.</title>
        <authorList>
            <person name="Miedel M.T."/>
            <person name="Graf N.J."/>
            <person name="Stephen K.E."/>
            <person name="Long O.S."/>
            <person name="Pak S.C."/>
            <person name="Perlmutter D.H."/>
            <person name="Silverman G.A."/>
            <person name="Luke C.J."/>
        </authorList>
    </citation>
    <scope>FUNCTION</scope>
    <scope>DISRUPTION PHENOTYPE</scope>
</reference>
<reference evidence="11" key="8">
    <citation type="journal article" date="2016" name="Nat. Commun.">
        <title>Chromatin-associated degradation is defined by UBXN-3/FAF1 to safeguard DNA replication fork progression.</title>
        <authorList>
            <person name="Franz A."/>
            <person name="Pirson P.A."/>
            <person name="Pilger D."/>
            <person name="Halder S."/>
            <person name="Achuthankutty D."/>
            <person name="Kashkar H."/>
            <person name="Ramadan K."/>
            <person name="Hoppe T."/>
        </authorList>
    </citation>
    <scope>FUNCTION</scope>
    <scope>DISRUPTION PHENOTYPE</scope>
</reference>
<reference evidence="11" key="9">
    <citation type="journal article" date="2017" name="Nat. Cell Biol.">
        <title>CUL-2LRR-1 and UBXN-3 drive replisome disassembly during DNA replication termination and mitosis.</title>
        <authorList>
            <person name="Sonneville R."/>
            <person name="Moreno S.P."/>
            <person name="Knebel A."/>
            <person name="Johnson C."/>
            <person name="Hastie C.J."/>
            <person name="Gartner A."/>
            <person name="Gambus A."/>
            <person name="Labib K."/>
        </authorList>
    </citation>
    <scope>FUNCTION</scope>
    <scope>DISRUPTION PHENOTYPE</scope>
</reference>